<dbReference type="EC" id="2.7.4.8" evidence="1"/>
<dbReference type="EMBL" id="BA000045">
    <property type="protein sequence ID" value="BAC89562.1"/>
    <property type="molecule type" value="Genomic_DNA"/>
</dbReference>
<dbReference type="RefSeq" id="NP_924567.1">
    <property type="nucleotide sequence ID" value="NC_005125.1"/>
</dbReference>
<dbReference type="RefSeq" id="WP_011141620.1">
    <property type="nucleotide sequence ID" value="NC_005125.1"/>
</dbReference>
<dbReference type="SMR" id="Q7NK59"/>
<dbReference type="FunCoup" id="Q7NK59">
    <property type="interactions" value="296"/>
</dbReference>
<dbReference type="STRING" id="251221.gene:10759111"/>
<dbReference type="EnsemblBacteria" id="BAC89562">
    <property type="protein sequence ID" value="BAC89562"/>
    <property type="gene ID" value="BAC89562"/>
</dbReference>
<dbReference type="KEGG" id="gvi:gll1621"/>
<dbReference type="PATRIC" id="fig|251221.4.peg.1658"/>
<dbReference type="eggNOG" id="COG0194">
    <property type="taxonomic scope" value="Bacteria"/>
</dbReference>
<dbReference type="HOGENOM" id="CLU_001715_1_2_3"/>
<dbReference type="InParanoid" id="Q7NK59"/>
<dbReference type="OrthoDB" id="9808150at2"/>
<dbReference type="PhylomeDB" id="Q7NK59"/>
<dbReference type="Proteomes" id="UP000000557">
    <property type="component" value="Chromosome"/>
</dbReference>
<dbReference type="GO" id="GO:0005829">
    <property type="term" value="C:cytosol"/>
    <property type="evidence" value="ECO:0000318"/>
    <property type="project" value="GO_Central"/>
</dbReference>
<dbReference type="GO" id="GO:0005524">
    <property type="term" value="F:ATP binding"/>
    <property type="evidence" value="ECO:0007669"/>
    <property type="project" value="UniProtKB-UniRule"/>
</dbReference>
<dbReference type="GO" id="GO:0004385">
    <property type="term" value="F:guanylate kinase activity"/>
    <property type="evidence" value="ECO:0000318"/>
    <property type="project" value="GO_Central"/>
</dbReference>
<dbReference type="CDD" id="cd00071">
    <property type="entry name" value="GMPK"/>
    <property type="match status" value="1"/>
</dbReference>
<dbReference type="FunFam" id="3.30.63.10:FF:000002">
    <property type="entry name" value="Guanylate kinase 1"/>
    <property type="match status" value="1"/>
</dbReference>
<dbReference type="Gene3D" id="3.30.63.10">
    <property type="entry name" value="Guanylate Kinase phosphate binding domain"/>
    <property type="match status" value="1"/>
</dbReference>
<dbReference type="Gene3D" id="3.40.50.300">
    <property type="entry name" value="P-loop containing nucleotide triphosphate hydrolases"/>
    <property type="match status" value="1"/>
</dbReference>
<dbReference type="HAMAP" id="MF_00328">
    <property type="entry name" value="Guanylate_kinase"/>
    <property type="match status" value="1"/>
</dbReference>
<dbReference type="InterPro" id="IPR008145">
    <property type="entry name" value="GK/Ca_channel_bsu"/>
</dbReference>
<dbReference type="InterPro" id="IPR008144">
    <property type="entry name" value="Guanylate_kin-like_dom"/>
</dbReference>
<dbReference type="InterPro" id="IPR017665">
    <property type="entry name" value="Guanylate_kinase"/>
</dbReference>
<dbReference type="InterPro" id="IPR020590">
    <property type="entry name" value="Guanylate_kinase_CS"/>
</dbReference>
<dbReference type="InterPro" id="IPR027417">
    <property type="entry name" value="P-loop_NTPase"/>
</dbReference>
<dbReference type="NCBIfam" id="TIGR03263">
    <property type="entry name" value="guanyl_kin"/>
    <property type="match status" value="1"/>
</dbReference>
<dbReference type="PANTHER" id="PTHR23117:SF13">
    <property type="entry name" value="GUANYLATE KINASE"/>
    <property type="match status" value="1"/>
</dbReference>
<dbReference type="PANTHER" id="PTHR23117">
    <property type="entry name" value="GUANYLATE KINASE-RELATED"/>
    <property type="match status" value="1"/>
</dbReference>
<dbReference type="Pfam" id="PF00625">
    <property type="entry name" value="Guanylate_kin"/>
    <property type="match status" value="1"/>
</dbReference>
<dbReference type="SMART" id="SM00072">
    <property type="entry name" value="GuKc"/>
    <property type="match status" value="1"/>
</dbReference>
<dbReference type="SUPFAM" id="SSF52540">
    <property type="entry name" value="P-loop containing nucleoside triphosphate hydrolases"/>
    <property type="match status" value="1"/>
</dbReference>
<dbReference type="PROSITE" id="PS00856">
    <property type="entry name" value="GUANYLATE_KINASE_1"/>
    <property type="match status" value="1"/>
</dbReference>
<dbReference type="PROSITE" id="PS50052">
    <property type="entry name" value="GUANYLATE_KINASE_2"/>
    <property type="match status" value="1"/>
</dbReference>
<feature type="chain" id="PRO_0000170543" description="Guanylate kinase">
    <location>
        <begin position="1"/>
        <end position="205"/>
    </location>
</feature>
<feature type="domain" description="Guanylate kinase-like" evidence="1">
    <location>
        <begin position="17"/>
        <end position="195"/>
    </location>
</feature>
<feature type="binding site" evidence="1">
    <location>
        <begin position="24"/>
        <end position="31"/>
    </location>
    <ligand>
        <name>ATP</name>
        <dbReference type="ChEBI" id="CHEBI:30616"/>
    </ligand>
</feature>
<name>KGUA_GLOVI</name>
<gene>
    <name evidence="1" type="primary">gmk</name>
    <name type="ordered locus">gll1621</name>
</gene>
<organism>
    <name type="scientific">Gloeobacter violaceus (strain ATCC 29082 / PCC 7421)</name>
    <dbReference type="NCBI Taxonomy" id="251221"/>
    <lineage>
        <taxon>Bacteria</taxon>
        <taxon>Bacillati</taxon>
        <taxon>Cyanobacteriota</taxon>
        <taxon>Cyanophyceae</taxon>
        <taxon>Gloeobacterales</taxon>
        <taxon>Gloeobacteraceae</taxon>
        <taxon>Gloeobacter</taxon>
    </lineage>
</organism>
<comment type="function">
    <text evidence="1">Essential for recycling GMP and indirectly, cGMP.</text>
</comment>
<comment type="catalytic activity">
    <reaction evidence="1">
        <text>GMP + ATP = GDP + ADP</text>
        <dbReference type="Rhea" id="RHEA:20780"/>
        <dbReference type="ChEBI" id="CHEBI:30616"/>
        <dbReference type="ChEBI" id="CHEBI:58115"/>
        <dbReference type="ChEBI" id="CHEBI:58189"/>
        <dbReference type="ChEBI" id="CHEBI:456216"/>
        <dbReference type="EC" id="2.7.4.8"/>
    </reaction>
</comment>
<comment type="subcellular location">
    <subcellularLocation>
        <location evidence="1">Cytoplasm</location>
    </subcellularLocation>
</comment>
<comment type="similarity">
    <text evidence="1">Belongs to the guanylate kinase family.</text>
</comment>
<reference key="1">
    <citation type="journal article" date="2003" name="DNA Res.">
        <title>Complete genome structure of Gloeobacter violaceus PCC 7421, a cyanobacterium that lacks thylakoids.</title>
        <authorList>
            <person name="Nakamura Y."/>
            <person name="Kaneko T."/>
            <person name="Sato S."/>
            <person name="Mimuro M."/>
            <person name="Miyashita H."/>
            <person name="Tsuchiya T."/>
            <person name="Sasamoto S."/>
            <person name="Watanabe A."/>
            <person name="Kawashima K."/>
            <person name="Kishida Y."/>
            <person name="Kiyokawa C."/>
            <person name="Kohara M."/>
            <person name="Matsumoto M."/>
            <person name="Matsuno A."/>
            <person name="Nakazaki N."/>
            <person name="Shimpo S."/>
            <person name="Takeuchi C."/>
            <person name="Yamada M."/>
            <person name="Tabata S."/>
        </authorList>
    </citation>
    <scope>NUCLEOTIDE SEQUENCE [LARGE SCALE GENOMIC DNA]</scope>
    <source>
        <strain>ATCC 29082 / PCC 7421</strain>
    </source>
</reference>
<sequence>MPFYRRSAGSPAGHPLSRLLVLSGPSGVGKDTILREVRERHPGLYVSVSATTRPPRPGEVDGRDYRFLSAAEFEEWIATDDLLEWACYVGNYYGTPKTPVLERLAVGEPVVLEIDVQGALQVKNNFPAAMLVFIRPPSLEVLAERLRSRGTDAPEAIERRLARAREELALADRFDHQVVNDKLAAAVEAVERLLFEEIPDEPAGG</sequence>
<proteinExistence type="inferred from homology"/>
<accession>Q7NK59</accession>
<protein>
    <recommendedName>
        <fullName evidence="1">Guanylate kinase</fullName>
        <ecNumber evidence="1">2.7.4.8</ecNumber>
    </recommendedName>
    <alternativeName>
        <fullName evidence="1">GMP kinase</fullName>
    </alternativeName>
</protein>
<keyword id="KW-0067">ATP-binding</keyword>
<keyword id="KW-0963">Cytoplasm</keyword>
<keyword id="KW-0418">Kinase</keyword>
<keyword id="KW-0547">Nucleotide-binding</keyword>
<keyword id="KW-1185">Reference proteome</keyword>
<keyword id="KW-0808">Transferase</keyword>
<evidence type="ECO:0000255" key="1">
    <source>
        <dbReference type="HAMAP-Rule" id="MF_00328"/>
    </source>
</evidence>